<feature type="chain" id="PRO_1000054855" description="Small ribosomal subunit protein uS15">
    <location>
        <begin position="1"/>
        <end position="89"/>
    </location>
</feature>
<feature type="region of interest" description="Disordered" evidence="2">
    <location>
        <begin position="1"/>
        <end position="24"/>
    </location>
</feature>
<feature type="compositionally biased region" description="Basic and acidic residues" evidence="2">
    <location>
        <begin position="1"/>
        <end position="10"/>
    </location>
</feature>
<name>RS15_RHOPS</name>
<reference key="1">
    <citation type="submission" date="2006-03" db="EMBL/GenBank/DDBJ databases">
        <title>Complete sequence of Rhodopseudomonas palustris BisB5.</title>
        <authorList>
            <consortium name="US DOE Joint Genome Institute"/>
            <person name="Copeland A."/>
            <person name="Lucas S."/>
            <person name="Lapidus A."/>
            <person name="Barry K."/>
            <person name="Detter J.C."/>
            <person name="Glavina del Rio T."/>
            <person name="Hammon N."/>
            <person name="Israni S."/>
            <person name="Dalin E."/>
            <person name="Tice H."/>
            <person name="Pitluck S."/>
            <person name="Chain P."/>
            <person name="Malfatti S."/>
            <person name="Shin M."/>
            <person name="Vergez L."/>
            <person name="Schmutz J."/>
            <person name="Larimer F."/>
            <person name="Land M."/>
            <person name="Hauser L."/>
            <person name="Pelletier D.A."/>
            <person name="Kyrpides N."/>
            <person name="Lykidis A."/>
            <person name="Oda Y."/>
            <person name="Harwood C.S."/>
            <person name="Richardson P."/>
        </authorList>
    </citation>
    <scope>NUCLEOTIDE SEQUENCE [LARGE SCALE GENOMIC DNA]</scope>
    <source>
        <strain>BisB5</strain>
    </source>
</reference>
<keyword id="KW-0687">Ribonucleoprotein</keyword>
<keyword id="KW-0689">Ribosomal protein</keyword>
<keyword id="KW-0694">RNA-binding</keyword>
<keyword id="KW-0699">rRNA-binding</keyword>
<protein>
    <recommendedName>
        <fullName evidence="1">Small ribosomal subunit protein uS15</fullName>
    </recommendedName>
    <alternativeName>
        <fullName evidence="3">30S ribosomal protein S15</fullName>
    </alternativeName>
</protein>
<comment type="function">
    <text evidence="1">One of the primary rRNA binding proteins, it binds directly to 16S rRNA where it helps nucleate assembly of the platform of the 30S subunit by binding and bridging several RNA helices of the 16S rRNA.</text>
</comment>
<comment type="function">
    <text evidence="1">Forms an intersubunit bridge (bridge B4) with the 23S rRNA of the 50S subunit in the ribosome.</text>
</comment>
<comment type="subunit">
    <text evidence="1">Part of the 30S ribosomal subunit. Forms a bridge to the 50S subunit in the 70S ribosome, contacting the 23S rRNA.</text>
</comment>
<comment type="similarity">
    <text evidence="1">Belongs to the universal ribosomal protein uS15 family.</text>
</comment>
<gene>
    <name evidence="1" type="primary">rpsO</name>
    <name type="ordered locus">RPD_0228</name>
</gene>
<evidence type="ECO:0000255" key="1">
    <source>
        <dbReference type="HAMAP-Rule" id="MF_01343"/>
    </source>
</evidence>
<evidence type="ECO:0000256" key="2">
    <source>
        <dbReference type="SAM" id="MobiDB-lite"/>
    </source>
</evidence>
<evidence type="ECO:0000305" key="3"/>
<accession>Q13EM1</accession>
<sequence>MSITAERKAEVIQGNANKAGDTGSPEVQVAILSERIVNLTAHFKTHTKDNHSRRGLLKLVSTRRSLLDYVKKKDEARYKALLEKHNIRR</sequence>
<dbReference type="EMBL" id="CP000283">
    <property type="protein sequence ID" value="ABE37468.1"/>
    <property type="molecule type" value="Genomic_DNA"/>
</dbReference>
<dbReference type="SMR" id="Q13EM1"/>
<dbReference type="STRING" id="316057.RPD_0228"/>
<dbReference type="KEGG" id="rpd:RPD_0228"/>
<dbReference type="eggNOG" id="COG0184">
    <property type="taxonomic scope" value="Bacteria"/>
</dbReference>
<dbReference type="HOGENOM" id="CLU_148518_0_0_5"/>
<dbReference type="BioCyc" id="RPAL316057:RPD_RS01155-MONOMER"/>
<dbReference type="Proteomes" id="UP000001818">
    <property type="component" value="Chromosome"/>
</dbReference>
<dbReference type="GO" id="GO:0022627">
    <property type="term" value="C:cytosolic small ribosomal subunit"/>
    <property type="evidence" value="ECO:0007669"/>
    <property type="project" value="TreeGrafter"/>
</dbReference>
<dbReference type="GO" id="GO:0019843">
    <property type="term" value="F:rRNA binding"/>
    <property type="evidence" value="ECO:0007669"/>
    <property type="project" value="UniProtKB-UniRule"/>
</dbReference>
<dbReference type="GO" id="GO:0003735">
    <property type="term" value="F:structural constituent of ribosome"/>
    <property type="evidence" value="ECO:0007669"/>
    <property type="project" value="InterPro"/>
</dbReference>
<dbReference type="GO" id="GO:0006412">
    <property type="term" value="P:translation"/>
    <property type="evidence" value="ECO:0007669"/>
    <property type="project" value="UniProtKB-UniRule"/>
</dbReference>
<dbReference type="CDD" id="cd00353">
    <property type="entry name" value="Ribosomal_S15p_S13e"/>
    <property type="match status" value="1"/>
</dbReference>
<dbReference type="FunFam" id="1.10.287.10:FF:000002">
    <property type="entry name" value="30S ribosomal protein S15"/>
    <property type="match status" value="1"/>
</dbReference>
<dbReference type="Gene3D" id="6.10.250.3130">
    <property type="match status" value="1"/>
</dbReference>
<dbReference type="Gene3D" id="1.10.287.10">
    <property type="entry name" value="S15/NS1, RNA-binding"/>
    <property type="match status" value="1"/>
</dbReference>
<dbReference type="HAMAP" id="MF_01343_B">
    <property type="entry name" value="Ribosomal_uS15_B"/>
    <property type="match status" value="1"/>
</dbReference>
<dbReference type="InterPro" id="IPR000589">
    <property type="entry name" value="Ribosomal_uS15"/>
</dbReference>
<dbReference type="InterPro" id="IPR005290">
    <property type="entry name" value="Ribosomal_uS15_bac-type"/>
</dbReference>
<dbReference type="InterPro" id="IPR009068">
    <property type="entry name" value="uS15_NS1_RNA-bd_sf"/>
</dbReference>
<dbReference type="NCBIfam" id="TIGR00952">
    <property type="entry name" value="S15_bact"/>
    <property type="match status" value="1"/>
</dbReference>
<dbReference type="PANTHER" id="PTHR23321">
    <property type="entry name" value="RIBOSOMAL PROTEIN S15, BACTERIAL AND ORGANELLAR"/>
    <property type="match status" value="1"/>
</dbReference>
<dbReference type="PANTHER" id="PTHR23321:SF26">
    <property type="entry name" value="SMALL RIBOSOMAL SUBUNIT PROTEIN US15M"/>
    <property type="match status" value="1"/>
</dbReference>
<dbReference type="Pfam" id="PF00312">
    <property type="entry name" value="Ribosomal_S15"/>
    <property type="match status" value="1"/>
</dbReference>
<dbReference type="SMART" id="SM01387">
    <property type="entry name" value="Ribosomal_S15"/>
    <property type="match status" value="1"/>
</dbReference>
<dbReference type="SUPFAM" id="SSF47060">
    <property type="entry name" value="S15/NS1 RNA-binding domain"/>
    <property type="match status" value="1"/>
</dbReference>
<dbReference type="PROSITE" id="PS00362">
    <property type="entry name" value="RIBOSOMAL_S15"/>
    <property type="match status" value="1"/>
</dbReference>
<organism>
    <name type="scientific">Rhodopseudomonas palustris (strain BisB5)</name>
    <dbReference type="NCBI Taxonomy" id="316057"/>
    <lineage>
        <taxon>Bacteria</taxon>
        <taxon>Pseudomonadati</taxon>
        <taxon>Pseudomonadota</taxon>
        <taxon>Alphaproteobacteria</taxon>
        <taxon>Hyphomicrobiales</taxon>
        <taxon>Nitrobacteraceae</taxon>
        <taxon>Rhodopseudomonas</taxon>
    </lineage>
</organism>
<proteinExistence type="inferred from homology"/>